<keyword id="KW-0687">Ribonucleoprotein</keyword>
<keyword id="KW-0689">Ribosomal protein</keyword>
<keyword id="KW-0694">RNA-binding</keyword>
<keyword id="KW-0699">rRNA-binding</keyword>
<reference key="1">
    <citation type="journal article" date="2010" name="PLoS Genet.">
        <title>Genome sequence of the plant growth promoting endophytic bacterium Enterobacter sp. 638.</title>
        <authorList>
            <person name="Taghavi S."/>
            <person name="van der Lelie D."/>
            <person name="Hoffman A."/>
            <person name="Zhang Y.B."/>
            <person name="Walla M.D."/>
            <person name="Vangronsveld J."/>
            <person name="Newman L."/>
            <person name="Monchy S."/>
        </authorList>
    </citation>
    <scope>NUCLEOTIDE SEQUENCE [LARGE SCALE GENOMIC DNA]</scope>
    <source>
        <strain>638</strain>
    </source>
</reference>
<gene>
    <name evidence="1" type="primary">rplY</name>
    <name type="ordered locus">Ent638_2781</name>
</gene>
<name>RL25_ENT38</name>
<protein>
    <recommendedName>
        <fullName evidence="1">Large ribosomal subunit protein bL25</fullName>
    </recommendedName>
    <alternativeName>
        <fullName evidence="2">50S ribosomal protein L25</fullName>
    </alternativeName>
</protein>
<organism>
    <name type="scientific">Enterobacter sp. (strain 638)</name>
    <dbReference type="NCBI Taxonomy" id="399742"/>
    <lineage>
        <taxon>Bacteria</taxon>
        <taxon>Pseudomonadati</taxon>
        <taxon>Pseudomonadota</taxon>
        <taxon>Gammaproteobacteria</taxon>
        <taxon>Enterobacterales</taxon>
        <taxon>Enterobacteriaceae</taxon>
        <taxon>Enterobacter</taxon>
    </lineage>
</organism>
<feature type="chain" id="PRO_1000067632" description="Large ribosomal subunit protein bL25">
    <location>
        <begin position="1"/>
        <end position="94"/>
    </location>
</feature>
<dbReference type="EMBL" id="CP000653">
    <property type="protein sequence ID" value="ABP61446.1"/>
    <property type="molecule type" value="Genomic_DNA"/>
</dbReference>
<dbReference type="RefSeq" id="WP_015959779.1">
    <property type="nucleotide sequence ID" value="NC_009436.1"/>
</dbReference>
<dbReference type="SMR" id="A4WCL6"/>
<dbReference type="STRING" id="399742.Ent638_2781"/>
<dbReference type="KEGG" id="ent:Ent638_2781"/>
<dbReference type="eggNOG" id="COG1825">
    <property type="taxonomic scope" value="Bacteria"/>
</dbReference>
<dbReference type="HOGENOM" id="CLU_137946_0_0_6"/>
<dbReference type="OrthoDB" id="9806411at2"/>
<dbReference type="Proteomes" id="UP000000230">
    <property type="component" value="Chromosome"/>
</dbReference>
<dbReference type="GO" id="GO:0022625">
    <property type="term" value="C:cytosolic large ribosomal subunit"/>
    <property type="evidence" value="ECO:0007669"/>
    <property type="project" value="TreeGrafter"/>
</dbReference>
<dbReference type="GO" id="GO:0008097">
    <property type="term" value="F:5S rRNA binding"/>
    <property type="evidence" value="ECO:0007669"/>
    <property type="project" value="InterPro"/>
</dbReference>
<dbReference type="GO" id="GO:0003735">
    <property type="term" value="F:structural constituent of ribosome"/>
    <property type="evidence" value="ECO:0007669"/>
    <property type="project" value="InterPro"/>
</dbReference>
<dbReference type="GO" id="GO:0006412">
    <property type="term" value="P:translation"/>
    <property type="evidence" value="ECO:0007669"/>
    <property type="project" value="UniProtKB-UniRule"/>
</dbReference>
<dbReference type="CDD" id="cd00495">
    <property type="entry name" value="Ribosomal_L25_TL5_CTC"/>
    <property type="match status" value="1"/>
</dbReference>
<dbReference type="FunFam" id="2.40.240.10:FF:000002">
    <property type="entry name" value="50S ribosomal protein L25"/>
    <property type="match status" value="1"/>
</dbReference>
<dbReference type="Gene3D" id="2.40.240.10">
    <property type="entry name" value="Ribosomal Protein L25, Chain P"/>
    <property type="match status" value="1"/>
</dbReference>
<dbReference type="HAMAP" id="MF_01336">
    <property type="entry name" value="Ribosomal_bL25"/>
    <property type="match status" value="1"/>
</dbReference>
<dbReference type="InterPro" id="IPR020056">
    <property type="entry name" value="Rbsml_bL25/Gln-tRNA_synth_N"/>
</dbReference>
<dbReference type="InterPro" id="IPR011035">
    <property type="entry name" value="Ribosomal_bL25/Gln-tRNA_synth"/>
</dbReference>
<dbReference type="InterPro" id="IPR020055">
    <property type="entry name" value="Ribosomal_bL25_short"/>
</dbReference>
<dbReference type="InterPro" id="IPR029751">
    <property type="entry name" value="Ribosomal_L25_dom"/>
</dbReference>
<dbReference type="InterPro" id="IPR020930">
    <property type="entry name" value="Ribosomal_uL5_bac-type"/>
</dbReference>
<dbReference type="NCBIfam" id="NF004612">
    <property type="entry name" value="PRK05943.1"/>
    <property type="match status" value="1"/>
</dbReference>
<dbReference type="PANTHER" id="PTHR33284">
    <property type="entry name" value="RIBOSOMAL PROTEIN L25/GLN-TRNA SYNTHETASE, ANTI-CODON-BINDING DOMAIN-CONTAINING PROTEIN"/>
    <property type="match status" value="1"/>
</dbReference>
<dbReference type="PANTHER" id="PTHR33284:SF1">
    <property type="entry name" value="RIBOSOMAL PROTEIN L25_GLN-TRNA SYNTHETASE, ANTI-CODON-BINDING DOMAIN-CONTAINING PROTEIN"/>
    <property type="match status" value="1"/>
</dbReference>
<dbReference type="Pfam" id="PF01386">
    <property type="entry name" value="Ribosomal_L25p"/>
    <property type="match status" value="1"/>
</dbReference>
<dbReference type="SUPFAM" id="SSF50715">
    <property type="entry name" value="Ribosomal protein L25-like"/>
    <property type="match status" value="1"/>
</dbReference>
<sequence length="94" mass="10569">MFTINAEVRAVQGKGASRRLRAANKFPAIIYGGEAAPVAIEMDQDKVWNQQTKEGFYTEVLTIVIDGKEEKVKVQAVQRHPFKPKLSHVDFVRA</sequence>
<accession>A4WCL6</accession>
<evidence type="ECO:0000255" key="1">
    <source>
        <dbReference type="HAMAP-Rule" id="MF_01336"/>
    </source>
</evidence>
<evidence type="ECO:0000305" key="2"/>
<proteinExistence type="inferred from homology"/>
<comment type="function">
    <text evidence="1">This is one of the proteins that binds to the 5S RNA in the ribosome where it forms part of the central protuberance.</text>
</comment>
<comment type="subunit">
    <text evidence="1">Part of the 50S ribosomal subunit; part of the 5S rRNA/L5/L18/L25 subcomplex. Contacts the 5S rRNA. Binds to the 5S rRNA independently of L5 and L18.</text>
</comment>
<comment type="similarity">
    <text evidence="1">Belongs to the bacterial ribosomal protein bL25 family.</text>
</comment>